<comment type="similarity">
    <text evidence="1">Belongs to the bacterial ribosomal protein bL28 family.</text>
</comment>
<keyword id="KW-0687">Ribonucleoprotein</keyword>
<keyword id="KW-0689">Ribosomal protein</keyword>
<gene>
    <name evidence="1" type="primary">rpmB</name>
    <name type="ordered locus">BALH_3489</name>
</gene>
<accession>A0RHN1</accession>
<evidence type="ECO:0000255" key="1">
    <source>
        <dbReference type="HAMAP-Rule" id="MF_00373"/>
    </source>
</evidence>
<evidence type="ECO:0000256" key="2">
    <source>
        <dbReference type="SAM" id="MobiDB-lite"/>
    </source>
</evidence>
<evidence type="ECO:0000305" key="3"/>
<organism>
    <name type="scientific">Bacillus thuringiensis (strain Al Hakam)</name>
    <dbReference type="NCBI Taxonomy" id="412694"/>
    <lineage>
        <taxon>Bacteria</taxon>
        <taxon>Bacillati</taxon>
        <taxon>Bacillota</taxon>
        <taxon>Bacilli</taxon>
        <taxon>Bacillales</taxon>
        <taxon>Bacillaceae</taxon>
        <taxon>Bacillus</taxon>
        <taxon>Bacillus cereus group</taxon>
    </lineage>
</organism>
<sequence length="62" mass="6923">MARVCAITGRKARSGNSRSHAMNATKRKWGANLQKVRVRIDGKVQRVYVSARALKSGKIERV</sequence>
<feature type="chain" id="PRO_1000007171" description="Large ribosomal subunit protein bL28">
    <location>
        <begin position="1"/>
        <end position="62"/>
    </location>
</feature>
<feature type="region of interest" description="Disordered" evidence="2">
    <location>
        <begin position="1"/>
        <end position="28"/>
    </location>
</feature>
<protein>
    <recommendedName>
        <fullName evidence="1">Large ribosomal subunit protein bL28</fullName>
    </recommendedName>
    <alternativeName>
        <fullName evidence="3">50S ribosomal protein L28</fullName>
    </alternativeName>
</protein>
<dbReference type="EMBL" id="CP000485">
    <property type="protein sequence ID" value="ABK86724.1"/>
    <property type="molecule type" value="Genomic_DNA"/>
</dbReference>
<dbReference type="RefSeq" id="WP_000124776.1">
    <property type="nucleotide sequence ID" value="NC_008600.1"/>
</dbReference>
<dbReference type="SMR" id="A0RHN1"/>
<dbReference type="GeneID" id="93007254"/>
<dbReference type="KEGG" id="btl:BALH_3489"/>
<dbReference type="HOGENOM" id="CLU_064548_7_1_9"/>
<dbReference type="GO" id="GO:1990904">
    <property type="term" value="C:ribonucleoprotein complex"/>
    <property type="evidence" value="ECO:0007669"/>
    <property type="project" value="UniProtKB-KW"/>
</dbReference>
<dbReference type="GO" id="GO:0005840">
    <property type="term" value="C:ribosome"/>
    <property type="evidence" value="ECO:0007669"/>
    <property type="project" value="UniProtKB-KW"/>
</dbReference>
<dbReference type="GO" id="GO:0003735">
    <property type="term" value="F:structural constituent of ribosome"/>
    <property type="evidence" value="ECO:0007669"/>
    <property type="project" value="InterPro"/>
</dbReference>
<dbReference type="GO" id="GO:0006412">
    <property type="term" value="P:translation"/>
    <property type="evidence" value="ECO:0007669"/>
    <property type="project" value="UniProtKB-UniRule"/>
</dbReference>
<dbReference type="Gene3D" id="2.30.170.40">
    <property type="entry name" value="Ribosomal protein L28/L24"/>
    <property type="match status" value="1"/>
</dbReference>
<dbReference type="HAMAP" id="MF_00373">
    <property type="entry name" value="Ribosomal_bL28"/>
    <property type="match status" value="1"/>
</dbReference>
<dbReference type="InterPro" id="IPR050096">
    <property type="entry name" value="Bacterial_rp_bL28"/>
</dbReference>
<dbReference type="InterPro" id="IPR026569">
    <property type="entry name" value="Ribosomal_bL28"/>
</dbReference>
<dbReference type="InterPro" id="IPR034704">
    <property type="entry name" value="Ribosomal_bL28/bL31-like_sf"/>
</dbReference>
<dbReference type="InterPro" id="IPR001383">
    <property type="entry name" value="Ribosomal_bL28_bact-type"/>
</dbReference>
<dbReference type="InterPro" id="IPR037147">
    <property type="entry name" value="Ribosomal_bL28_sf"/>
</dbReference>
<dbReference type="NCBIfam" id="TIGR00009">
    <property type="entry name" value="L28"/>
    <property type="match status" value="1"/>
</dbReference>
<dbReference type="PANTHER" id="PTHR39080">
    <property type="entry name" value="50S RIBOSOMAL PROTEIN L28"/>
    <property type="match status" value="1"/>
</dbReference>
<dbReference type="PANTHER" id="PTHR39080:SF1">
    <property type="entry name" value="LARGE RIBOSOMAL SUBUNIT PROTEIN BL28A"/>
    <property type="match status" value="1"/>
</dbReference>
<dbReference type="Pfam" id="PF00830">
    <property type="entry name" value="Ribosomal_L28"/>
    <property type="match status" value="1"/>
</dbReference>
<dbReference type="SUPFAM" id="SSF143800">
    <property type="entry name" value="L28p-like"/>
    <property type="match status" value="1"/>
</dbReference>
<proteinExistence type="inferred from homology"/>
<name>RL28_BACAH</name>
<reference key="1">
    <citation type="journal article" date="2007" name="J. Bacteriol.">
        <title>The complete genome sequence of Bacillus thuringiensis Al Hakam.</title>
        <authorList>
            <person name="Challacombe J.F."/>
            <person name="Altherr M.R."/>
            <person name="Xie G."/>
            <person name="Bhotika S.S."/>
            <person name="Brown N."/>
            <person name="Bruce D."/>
            <person name="Campbell C.S."/>
            <person name="Campbell M.L."/>
            <person name="Chen J."/>
            <person name="Chertkov O."/>
            <person name="Cleland C."/>
            <person name="Dimitrijevic M."/>
            <person name="Doggett N.A."/>
            <person name="Fawcett J.J."/>
            <person name="Glavina T."/>
            <person name="Goodwin L.A."/>
            <person name="Green L.D."/>
            <person name="Han C.S."/>
            <person name="Hill K.K."/>
            <person name="Hitchcock P."/>
            <person name="Jackson P.J."/>
            <person name="Keim P."/>
            <person name="Kewalramani A.R."/>
            <person name="Longmire J."/>
            <person name="Lucas S."/>
            <person name="Malfatti S."/>
            <person name="Martinez D."/>
            <person name="McMurry K."/>
            <person name="Meincke L.J."/>
            <person name="Misra M."/>
            <person name="Moseman B.L."/>
            <person name="Mundt M."/>
            <person name="Munk A.C."/>
            <person name="Okinaka R.T."/>
            <person name="Parson-Quintana B."/>
            <person name="Reilly L.P."/>
            <person name="Richardson P."/>
            <person name="Robinson D.L."/>
            <person name="Saunders E."/>
            <person name="Tapia R."/>
            <person name="Tesmer J.G."/>
            <person name="Thayer N."/>
            <person name="Thompson L.S."/>
            <person name="Tice H."/>
            <person name="Ticknor L.O."/>
            <person name="Wills P.L."/>
            <person name="Gilna P."/>
            <person name="Brettin T.S."/>
        </authorList>
    </citation>
    <scope>NUCLEOTIDE SEQUENCE [LARGE SCALE GENOMIC DNA]</scope>
    <source>
        <strain>Al Hakam</strain>
    </source>
</reference>